<keyword id="KW-0687">Ribonucleoprotein</keyword>
<keyword id="KW-0689">Ribosomal protein</keyword>
<keyword id="KW-0694">RNA-binding</keyword>
<keyword id="KW-0699">rRNA-binding</keyword>
<keyword id="KW-0820">tRNA-binding</keyword>
<dbReference type="EMBL" id="CP001091">
    <property type="protein sequence ID" value="ACE62191.1"/>
    <property type="molecule type" value="Genomic_DNA"/>
</dbReference>
<dbReference type="RefSeq" id="WP_005619841.1">
    <property type="nucleotide sequence ID" value="NC_010939.1"/>
</dbReference>
<dbReference type="SMR" id="B3H2G6"/>
<dbReference type="GeneID" id="48599746"/>
<dbReference type="KEGG" id="apa:APP7_1539"/>
<dbReference type="HOGENOM" id="CLU_072226_1_1_6"/>
<dbReference type="Proteomes" id="UP000001226">
    <property type="component" value="Chromosome"/>
</dbReference>
<dbReference type="GO" id="GO:0015935">
    <property type="term" value="C:small ribosomal subunit"/>
    <property type="evidence" value="ECO:0007669"/>
    <property type="project" value="InterPro"/>
</dbReference>
<dbReference type="GO" id="GO:0019843">
    <property type="term" value="F:rRNA binding"/>
    <property type="evidence" value="ECO:0007669"/>
    <property type="project" value="UniProtKB-UniRule"/>
</dbReference>
<dbReference type="GO" id="GO:0003735">
    <property type="term" value="F:structural constituent of ribosome"/>
    <property type="evidence" value="ECO:0007669"/>
    <property type="project" value="InterPro"/>
</dbReference>
<dbReference type="GO" id="GO:0000049">
    <property type="term" value="F:tRNA binding"/>
    <property type="evidence" value="ECO:0007669"/>
    <property type="project" value="UniProtKB-UniRule"/>
</dbReference>
<dbReference type="GO" id="GO:0006412">
    <property type="term" value="P:translation"/>
    <property type="evidence" value="ECO:0007669"/>
    <property type="project" value="UniProtKB-UniRule"/>
</dbReference>
<dbReference type="CDD" id="cd14869">
    <property type="entry name" value="uS7_Bacteria"/>
    <property type="match status" value="1"/>
</dbReference>
<dbReference type="FunFam" id="1.10.455.10:FF:000001">
    <property type="entry name" value="30S ribosomal protein S7"/>
    <property type="match status" value="1"/>
</dbReference>
<dbReference type="Gene3D" id="1.10.455.10">
    <property type="entry name" value="Ribosomal protein S7 domain"/>
    <property type="match status" value="1"/>
</dbReference>
<dbReference type="HAMAP" id="MF_00480_B">
    <property type="entry name" value="Ribosomal_uS7_B"/>
    <property type="match status" value="1"/>
</dbReference>
<dbReference type="InterPro" id="IPR000235">
    <property type="entry name" value="Ribosomal_uS7"/>
</dbReference>
<dbReference type="InterPro" id="IPR005717">
    <property type="entry name" value="Ribosomal_uS7_bac/org-type"/>
</dbReference>
<dbReference type="InterPro" id="IPR020606">
    <property type="entry name" value="Ribosomal_uS7_CS"/>
</dbReference>
<dbReference type="InterPro" id="IPR023798">
    <property type="entry name" value="Ribosomal_uS7_dom"/>
</dbReference>
<dbReference type="InterPro" id="IPR036823">
    <property type="entry name" value="Ribosomal_uS7_dom_sf"/>
</dbReference>
<dbReference type="NCBIfam" id="TIGR01029">
    <property type="entry name" value="rpsG_bact"/>
    <property type="match status" value="1"/>
</dbReference>
<dbReference type="PANTHER" id="PTHR11205">
    <property type="entry name" value="RIBOSOMAL PROTEIN S7"/>
    <property type="match status" value="1"/>
</dbReference>
<dbReference type="Pfam" id="PF00177">
    <property type="entry name" value="Ribosomal_S7"/>
    <property type="match status" value="1"/>
</dbReference>
<dbReference type="PIRSF" id="PIRSF002122">
    <property type="entry name" value="RPS7p_RPS7a_RPS5e_RPS7o"/>
    <property type="match status" value="1"/>
</dbReference>
<dbReference type="SUPFAM" id="SSF47973">
    <property type="entry name" value="Ribosomal protein S7"/>
    <property type="match status" value="1"/>
</dbReference>
<dbReference type="PROSITE" id="PS00052">
    <property type="entry name" value="RIBOSOMAL_S7"/>
    <property type="match status" value="1"/>
</dbReference>
<feature type="chain" id="PRO_1000125883" description="Small ribosomal subunit protein uS7">
    <location>
        <begin position="1"/>
        <end position="156"/>
    </location>
</feature>
<gene>
    <name evidence="1" type="primary">rpsG</name>
    <name type="ordered locus">APP7_1539</name>
</gene>
<name>RS7_ACTP7</name>
<proteinExistence type="inferred from homology"/>
<evidence type="ECO:0000255" key="1">
    <source>
        <dbReference type="HAMAP-Rule" id="MF_00480"/>
    </source>
</evidence>
<evidence type="ECO:0000305" key="2"/>
<accession>B3H2G6</accession>
<reference key="1">
    <citation type="submission" date="2008-06" db="EMBL/GenBank/DDBJ databases">
        <title>Genome and proteome analysis of A. pleuropneumoniae serotype 7.</title>
        <authorList>
            <person name="Linke B."/>
            <person name="Buettner F."/>
            <person name="Martinez-Arias R."/>
            <person name="Goesmann A."/>
            <person name="Baltes N."/>
            <person name="Tegetmeyer H."/>
            <person name="Singh M."/>
            <person name="Gerlach G.F."/>
        </authorList>
    </citation>
    <scope>NUCLEOTIDE SEQUENCE [LARGE SCALE GENOMIC DNA]</scope>
    <source>
        <strain>AP76</strain>
    </source>
</reference>
<protein>
    <recommendedName>
        <fullName evidence="1">Small ribosomal subunit protein uS7</fullName>
    </recommendedName>
    <alternativeName>
        <fullName evidence="2">30S ribosomal protein S7</fullName>
    </alternativeName>
</protein>
<sequence length="156" mass="17531">MPRRRSVEPRKILPDPKFGSELLAKFINVLMVDGKKSTAESIIYGALETLAQRTGKEALEAFEAALENVRPTVEVKSRRVGGSTYQVPVEVRPSRRNALAMRWIVEAARKRGDKSMALRLANELSDAADNKGTAVKKREDVHRMAEANKAFAHFRW</sequence>
<comment type="function">
    <text evidence="1">One of the primary rRNA binding proteins, it binds directly to 16S rRNA where it nucleates assembly of the head domain of the 30S subunit. Is located at the subunit interface close to the decoding center, probably blocks exit of the E-site tRNA.</text>
</comment>
<comment type="subunit">
    <text evidence="1">Part of the 30S ribosomal subunit. Contacts proteins S9 and S11.</text>
</comment>
<comment type="similarity">
    <text evidence="1">Belongs to the universal ribosomal protein uS7 family.</text>
</comment>
<organism>
    <name type="scientific">Actinobacillus pleuropneumoniae serotype 7 (strain AP76)</name>
    <dbReference type="NCBI Taxonomy" id="537457"/>
    <lineage>
        <taxon>Bacteria</taxon>
        <taxon>Pseudomonadati</taxon>
        <taxon>Pseudomonadota</taxon>
        <taxon>Gammaproteobacteria</taxon>
        <taxon>Pasteurellales</taxon>
        <taxon>Pasteurellaceae</taxon>
        <taxon>Actinobacillus</taxon>
    </lineage>
</organism>